<keyword id="KW-0328">Glycosyltransferase</keyword>
<keyword id="KW-1185">Reference proteome</keyword>
<keyword id="KW-0808">Transferase</keyword>
<reference key="1">
    <citation type="journal article" date="1998" name="Nature">
        <title>Deciphering the biology of Mycobacterium tuberculosis from the complete genome sequence.</title>
        <authorList>
            <person name="Cole S.T."/>
            <person name="Brosch R."/>
            <person name="Parkhill J."/>
            <person name="Garnier T."/>
            <person name="Churcher C.M."/>
            <person name="Harris D.E."/>
            <person name="Gordon S.V."/>
            <person name="Eiglmeier K."/>
            <person name="Gas S."/>
            <person name="Barry C.E. III"/>
            <person name="Tekaia F."/>
            <person name="Badcock K."/>
            <person name="Basham D."/>
            <person name="Brown D."/>
            <person name="Chillingworth T."/>
            <person name="Connor R."/>
            <person name="Davies R.M."/>
            <person name="Devlin K."/>
            <person name="Feltwell T."/>
            <person name="Gentles S."/>
            <person name="Hamlin N."/>
            <person name="Holroyd S."/>
            <person name="Hornsby T."/>
            <person name="Jagels K."/>
            <person name="Krogh A."/>
            <person name="McLean J."/>
            <person name="Moule S."/>
            <person name="Murphy L.D."/>
            <person name="Oliver S."/>
            <person name="Osborne J."/>
            <person name="Quail M.A."/>
            <person name="Rajandream M.A."/>
            <person name="Rogers J."/>
            <person name="Rutter S."/>
            <person name="Seeger K."/>
            <person name="Skelton S."/>
            <person name="Squares S."/>
            <person name="Squares R."/>
            <person name="Sulston J.E."/>
            <person name="Taylor K."/>
            <person name="Whitehead S."/>
            <person name="Barrell B.G."/>
        </authorList>
    </citation>
    <scope>NUCLEOTIDE SEQUENCE [LARGE SCALE GENOMIC DNA]</scope>
    <source>
        <strain>ATCC 25618 / H37Rv</strain>
    </source>
</reference>
<reference key="2">
    <citation type="journal article" date="2011" name="Mol. Cell. Proteomics">
        <title>Proteogenomic analysis of Mycobacterium tuberculosis by high resolution mass spectrometry.</title>
        <authorList>
            <person name="Kelkar D.S."/>
            <person name="Kumar D."/>
            <person name="Kumar P."/>
            <person name="Balakrishnan L."/>
            <person name="Muthusamy B."/>
            <person name="Yadav A.K."/>
            <person name="Shrivastava P."/>
            <person name="Marimuthu A."/>
            <person name="Anand S."/>
            <person name="Sundaram H."/>
            <person name="Kingsbury R."/>
            <person name="Harsha H.C."/>
            <person name="Nair B."/>
            <person name="Prasad T.S."/>
            <person name="Chauhan D.S."/>
            <person name="Katoch K."/>
            <person name="Katoch V.M."/>
            <person name="Kumar P."/>
            <person name="Chaerkady R."/>
            <person name="Ramachandran S."/>
            <person name="Dash D."/>
            <person name="Pandey A."/>
        </authorList>
    </citation>
    <scope>IDENTIFICATION BY MASS SPECTROMETRY [LARGE SCALE ANALYSIS]</scope>
    <source>
        <strain>ATCC 25618 / H37Rv</strain>
    </source>
</reference>
<protein>
    <recommendedName>
        <fullName>Uncharacterized glycosyltransferase Rv1514c</fullName>
        <ecNumber>2.4.-.-</ecNumber>
    </recommendedName>
</protein>
<evidence type="ECO:0000305" key="1"/>
<dbReference type="EC" id="2.4.-.-"/>
<dbReference type="EMBL" id="AL123456">
    <property type="protein sequence ID" value="CCP44278.1"/>
    <property type="molecule type" value="Genomic_DNA"/>
</dbReference>
<dbReference type="PIR" id="E70714">
    <property type="entry name" value="E70714"/>
</dbReference>
<dbReference type="RefSeq" id="NP_216030.1">
    <property type="nucleotide sequence ID" value="NC_000962.3"/>
</dbReference>
<dbReference type="RefSeq" id="WP_003407650.1">
    <property type="nucleotide sequence ID" value="NZ_NVQJ01000004.1"/>
</dbReference>
<dbReference type="SMR" id="P9WMX9"/>
<dbReference type="STRING" id="83332.Rv1514c"/>
<dbReference type="PaxDb" id="83332-Rv1514c"/>
<dbReference type="DNASU" id="886457"/>
<dbReference type="GeneID" id="886457"/>
<dbReference type="KEGG" id="mtu:Rv1514c"/>
<dbReference type="KEGG" id="mtv:RVBD_1514c"/>
<dbReference type="TubercuList" id="Rv1514c"/>
<dbReference type="eggNOG" id="COG1216">
    <property type="taxonomic scope" value="Bacteria"/>
</dbReference>
<dbReference type="InParanoid" id="P9WMX9"/>
<dbReference type="OrthoDB" id="9788101at2"/>
<dbReference type="PhylomeDB" id="P9WMX9"/>
<dbReference type="Proteomes" id="UP000001584">
    <property type="component" value="Chromosome"/>
</dbReference>
<dbReference type="GO" id="GO:0016757">
    <property type="term" value="F:glycosyltransferase activity"/>
    <property type="evidence" value="ECO:0007669"/>
    <property type="project" value="UniProtKB-KW"/>
</dbReference>
<dbReference type="CDD" id="cd06433">
    <property type="entry name" value="GT_2_WfgS_like"/>
    <property type="match status" value="1"/>
</dbReference>
<dbReference type="Gene3D" id="3.90.550.10">
    <property type="entry name" value="Spore Coat Polysaccharide Biosynthesis Protein SpsA, Chain A"/>
    <property type="match status" value="1"/>
</dbReference>
<dbReference type="InterPro" id="IPR001173">
    <property type="entry name" value="Glyco_trans_2-like"/>
</dbReference>
<dbReference type="InterPro" id="IPR029044">
    <property type="entry name" value="Nucleotide-diphossugar_trans"/>
</dbReference>
<dbReference type="PANTHER" id="PTHR22916:SF67">
    <property type="entry name" value="COLANIC ACID BIOSYNTHESIS GLYCOSYL TRANSFERASE WCAE-RELATED"/>
    <property type="match status" value="1"/>
</dbReference>
<dbReference type="PANTHER" id="PTHR22916">
    <property type="entry name" value="GLYCOSYLTRANSFERASE"/>
    <property type="match status" value="1"/>
</dbReference>
<dbReference type="Pfam" id="PF00535">
    <property type="entry name" value="Glycos_transf_2"/>
    <property type="match status" value="1"/>
</dbReference>
<dbReference type="SUPFAM" id="SSF53448">
    <property type="entry name" value="Nucleotide-diphospho-sugar transferases"/>
    <property type="match status" value="1"/>
</dbReference>
<name>Y1514_MYCTU</name>
<comment type="similarity">
    <text evidence="1">Belongs to the glycosyltransferase 2 family.</text>
</comment>
<organism>
    <name type="scientific">Mycobacterium tuberculosis (strain ATCC 25618 / H37Rv)</name>
    <dbReference type="NCBI Taxonomy" id="83332"/>
    <lineage>
        <taxon>Bacteria</taxon>
        <taxon>Bacillati</taxon>
        <taxon>Actinomycetota</taxon>
        <taxon>Actinomycetes</taxon>
        <taxon>Mycobacteriales</taxon>
        <taxon>Mycobacteriaceae</taxon>
        <taxon>Mycobacterium</taxon>
        <taxon>Mycobacterium tuberculosis complex</taxon>
    </lineage>
</organism>
<gene>
    <name type="ordered locus">Rv1514c</name>
    <name type="ORF">MTCY277.36c</name>
</gene>
<proteinExistence type="evidence at protein level"/>
<sequence length="262" mass="28965">MTSAPTVSVITISFNDLDGLQRTVKSVRAQRYRGRIEHIVIDGGSGDDVVAYLSGCEPGFAYWQSEPDGGRYDAMNQGIAHASGDLLWFLHSADRFSGPDVVAQAVEALSGKGPVSELWGFGMDRLVGLDRVRGPIPFSLRKFLAGKQVVPHQASFFGSSLVAKIGGYDLDFGIAADQEFILRAALVCEPVTIRCVLCEFDTTGVGSHREPSAVFGDLRRMGDLHRRYPFGGRRISHAYLRGREFYAYNSRFWENVFTRMSK</sequence>
<feature type="chain" id="PRO_0000059249" description="Uncharacterized glycosyltransferase Rv1514c">
    <location>
        <begin position="1"/>
        <end position="262"/>
    </location>
</feature>
<accession>P9WMX9</accession>
<accession>L0T9V1</accession>
<accession>P71793</accession>